<organism>
    <name type="scientific">Malassezia globosa (strain ATCC MYA-4612 / CBS 7966)</name>
    <name type="common">Dandruff-associated fungus</name>
    <dbReference type="NCBI Taxonomy" id="425265"/>
    <lineage>
        <taxon>Eukaryota</taxon>
        <taxon>Fungi</taxon>
        <taxon>Dikarya</taxon>
        <taxon>Basidiomycota</taxon>
        <taxon>Ustilaginomycotina</taxon>
        <taxon>Malasseziomycetes</taxon>
        <taxon>Malasseziales</taxon>
        <taxon>Malasseziaceae</taxon>
        <taxon>Malassezia</taxon>
    </lineage>
</organism>
<reference key="1">
    <citation type="journal article" date="2007" name="Proc. Natl. Acad. Sci. U.S.A.">
        <title>Dandruff-associated Malassezia genomes reveal convergent and divergent virulence traits shared with plant and human fungal pathogens.</title>
        <authorList>
            <person name="Xu J."/>
            <person name="Saunders C.W."/>
            <person name="Hu P."/>
            <person name="Grant R.A."/>
            <person name="Boekhout T."/>
            <person name="Kuramae E.E."/>
            <person name="Kronstad J.W."/>
            <person name="DeAngelis Y.M."/>
            <person name="Reeder N.L."/>
            <person name="Johnstone K.R."/>
            <person name="Leland M."/>
            <person name="Fieno A.M."/>
            <person name="Begley W.M."/>
            <person name="Sun Y."/>
            <person name="Lacey M.P."/>
            <person name="Chaudhary T."/>
            <person name="Keough T."/>
            <person name="Chu L."/>
            <person name="Sears R."/>
            <person name="Yuan B."/>
            <person name="Dawson T.L. Jr."/>
        </authorList>
    </citation>
    <scope>NUCLEOTIDE SEQUENCE [LARGE SCALE GENOMIC DNA]</scope>
    <source>
        <strain>ATCC MYA-4612 / CBS 7966</strain>
    </source>
</reference>
<dbReference type="EMBL" id="AAYY01000020">
    <property type="protein sequence ID" value="EDP41533.1"/>
    <property type="molecule type" value="Genomic_DNA"/>
</dbReference>
<dbReference type="RefSeq" id="XP_001728747.1">
    <property type="nucleotide sequence ID" value="XM_001728695.1"/>
</dbReference>
<dbReference type="SMR" id="A8QD14"/>
<dbReference type="FunCoup" id="A8QD14">
    <property type="interactions" value="35"/>
</dbReference>
<dbReference type="STRING" id="425265.A8QD14"/>
<dbReference type="GeneID" id="5853066"/>
<dbReference type="KEGG" id="mgl:MGL_4082"/>
<dbReference type="VEuPathDB" id="FungiDB:MGL_4082"/>
<dbReference type="InParanoid" id="A8QD14"/>
<dbReference type="OMA" id="MSFNFTW"/>
<dbReference type="OrthoDB" id="17927at2759"/>
<dbReference type="Proteomes" id="UP000008837">
    <property type="component" value="Unassembled WGS sequence"/>
</dbReference>
<dbReference type="GO" id="GO:0032865">
    <property type="term" value="C:ERMES complex"/>
    <property type="evidence" value="ECO:0007669"/>
    <property type="project" value="UniProtKB-UniRule"/>
</dbReference>
<dbReference type="GO" id="GO:0008289">
    <property type="term" value="F:lipid binding"/>
    <property type="evidence" value="ECO:0007669"/>
    <property type="project" value="UniProtKB-KW"/>
</dbReference>
<dbReference type="GO" id="GO:0000002">
    <property type="term" value="P:mitochondrial genome maintenance"/>
    <property type="evidence" value="ECO:0007669"/>
    <property type="project" value="UniProtKB-UniRule"/>
</dbReference>
<dbReference type="GO" id="GO:1990456">
    <property type="term" value="P:mitochondrion-endoplasmic reticulum membrane tethering"/>
    <property type="evidence" value="ECO:0007669"/>
    <property type="project" value="TreeGrafter"/>
</dbReference>
<dbReference type="GO" id="GO:0015914">
    <property type="term" value="P:phospholipid transport"/>
    <property type="evidence" value="ECO:0007669"/>
    <property type="project" value="TreeGrafter"/>
</dbReference>
<dbReference type="CDD" id="cd21673">
    <property type="entry name" value="SMP_Mdm34"/>
    <property type="match status" value="1"/>
</dbReference>
<dbReference type="HAMAP" id="MF_03105">
    <property type="entry name" value="Mdm34"/>
    <property type="match status" value="1"/>
</dbReference>
<dbReference type="InterPro" id="IPR027536">
    <property type="entry name" value="Mdm34"/>
</dbReference>
<dbReference type="InterPro" id="IPR031468">
    <property type="entry name" value="SMP_LBD"/>
</dbReference>
<dbReference type="PANTHER" id="PTHR28185">
    <property type="entry name" value="MITOCHONDRIAL DISTRIBUTION AND MORPHOLOGY PROTEIN 34"/>
    <property type="match status" value="1"/>
</dbReference>
<dbReference type="PANTHER" id="PTHR28185:SF1">
    <property type="entry name" value="MITOCHONDRIAL DISTRIBUTION AND MORPHOLOGY PROTEIN 34"/>
    <property type="match status" value="1"/>
</dbReference>
<dbReference type="PROSITE" id="PS51847">
    <property type="entry name" value="SMP"/>
    <property type="match status" value="1"/>
</dbReference>
<protein>
    <recommendedName>
        <fullName evidence="1">Mitochondrial distribution and morphology protein 34</fullName>
    </recommendedName>
</protein>
<comment type="function">
    <text evidence="1">Component of the ERMES/MDM complex, which serves as a molecular tether to connect the endoplasmic reticulum (ER) and mitochondria. Components of this complex are involved in the control of mitochondrial shape and protein biogenesis, and function in nonvesicular lipid trafficking between the ER and mitochondria. MDM34 is required for the interaction of the ER-resident membrane protein MMM1 and the outer mitochondrial membrane-resident beta-barrel protein MDM10.</text>
</comment>
<comment type="subunit">
    <text evidence="1">Component of the ER-mitochondria encounter structure (ERMES) or MDM complex, composed of MMM1, MDM10, MDM12 and MDM34.</text>
</comment>
<comment type="subcellular location">
    <subcellularLocation>
        <location evidence="1">Mitochondrion outer membrane</location>
        <topology evidence="1">Multi-pass membrane protein</topology>
    </subcellularLocation>
    <text evidence="1">The ERMES/MDM complex localizes to a few discrete foci (around 10 per single cell), that represent mitochondria-endoplasmic reticulum junctions. These foci are often found next to mtDNA nucleoids.</text>
</comment>
<comment type="domain">
    <text evidence="1">Lacks alpha-helical transmembrane segments, suggesting that it resides in the membrane via beta-sheet conformations similar to those predicted for other outer membrane proteins and porin.</text>
</comment>
<comment type="domain">
    <text evidence="1">The SMP-LTD domain is a barrel-like domain that can bind various types of glycerophospholipids in its interior and mediate their transfer between two adjacent bilayers.</text>
</comment>
<comment type="similarity">
    <text evidence="1">Belongs to the MDM34 family.</text>
</comment>
<accession>A8QD14</accession>
<evidence type="ECO:0000255" key="1">
    <source>
        <dbReference type="HAMAP-Rule" id="MF_03105"/>
    </source>
</evidence>
<evidence type="ECO:0000256" key="2">
    <source>
        <dbReference type="SAM" id="MobiDB-lite"/>
    </source>
</evidence>
<gene>
    <name evidence="1" type="primary">MDM34</name>
    <name type="ORF">MGL_4082</name>
</gene>
<feature type="chain" id="PRO_0000384348" description="Mitochondrial distribution and morphology protein 34">
    <location>
        <begin position="1"/>
        <end position="367"/>
    </location>
</feature>
<feature type="domain" description="SMP-LTD" evidence="1">
    <location>
        <begin position="1"/>
        <end position="197"/>
    </location>
</feature>
<feature type="region of interest" description="Disordered" evidence="2">
    <location>
        <begin position="267"/>
        <end position="311"/>
    </location>
</feature>
<feature type="region of interest" description="Disordered" evidence="2">
    <location>
        <begin position="347"/>
        <end position="367"/>
    </location>
</feature>
<feature type="compositionally biased region" description="Polar residues" evidence="2">
    <location>
        <begin position="286"/>
        <end position="302"/>
    </location>
</feature>
<proteinExistence type="inferred from homology"/>
<keyword id="KW-0445">Lipid transport</keyword>
<keyword id="KW-0446">Lipid-binding</keyword>
<keyword id="KW-0472">Membrane</keyword>
<keyword id="KW-0496">Mitochondrion</keyword>
<keyword id="KW-1000">Mitochondrion outer membrane</keyword>
<keyword id="KW-1185">Reference proteome</keyword>
<keyword id="KW-0812">Transmembrane</keyword>
<keyword id="KW-1134">Transmembrane beta strand</keyword>
<keyword id="KW-0813">Transport</keyword>
<sequence>MSFNFTWPEFSAEFYEYAVQTLTTALNRGQKPKSIVGDIHVKGLHMGRVPPELEILEIGDLSRERFRGIFRFVYAGDAHLEFSTGVQANPLARGSEDHGIFSGPMTSRGMLFAASPLTVPMRVCLSDFKLRAIVVLVVSRTKGITLVFKNDPLESVKVSSTFDSVGVIQRYLQEEIEGQLREMFRADLPSIIHRLSQDWLRTESKEKVVPTPSAQPAKPAMPPVPSDVWPSHHTADVPLSVLALEEAAPSAYASHLTKLDTASQSSQGLKDLVQPAGSHPAGARTFHTTSRVRVPSSLESNAPPTPIALSSPGGLDVAGHLAELLRANHTLSPYTPHPRLVALRTMPAHRPRSSRVHARQKRAFHLS</sequence>
<name>MDM34_MALGO</name>